<proteinExistence type="evidence at transcript level"/>
<protein>
    <recommendedName>
        <fullName>Transcription factor PCL1</fullName>
    </recommendedName>
    <alternativeName>
        <fullName>Protein PHYTOCLOCK 1 homolog</fullName>
        <shortName>OsPCL1</shortName>
    </alternativeName>
</protein>
<organism>
    <name type="scientific">Oryza sativa subsp. japonica</name>
    <name type="common">Rice</name>
    <dbReference type="NCBI Taxonomy" id="39947"/>
    <lineage>
        <taxon>Eukaryota</taxon>
        <taxon>Viridiplantae</taxon>
        <taxon>Streptophyta</taxon>
        <taxon>Embryophyta</taxon>
        <taxon>Tracheophyta</taxon>
        <taxon>Spermatophyta</taxon>
        <taxon>Magnoliopsida</taxon>
        <taxon>Liliopsida</taxon>
        <taxon>Poales</taxon>
        <taxon>Poaceae</taxon>
        <taxon>BOP clade</taxon>
        <taxon>Oryzoideae</taxon>
        <taxon>Oryzeae</taxon>
        <taxon>Oryzinae</taxon>
        <taxon>Oryza</taxon>
        <taxon>Oryza sativa</taxon>
    </lineage>
</organism>
<comment type="function">
    <text evidence="1">Transcription factor that is essential for the generation of the circadian clock oscillation. Binds to specific sites on CCA1 promoter leading to CCA1 activation (By similarity).</text>
</comment>
<comment type="subcellular location">
    <subcellularLocation>
        <location evidence="2">Nucleus</location>
    </subcellularLocation>
</comment>
<comment type="induction">
    <text evidence="4">Circadian oscillation with peaks at subjective dusk.</text>
</comment>
<feature type="chain" id="PRO_0000422985" description="Transcription factor PCL1">
    <location>
        <begin position="1"/>
        <end position="238"/>
    </location>
</feature>
<feature type="DNA-binding region" description="Myb-like GARP" evidence="2">
    <location>
        <begin position="115"/>
        <end position="174"/>
    </location>
</feature>
<feature type="region of interest" description="Disordered" evidence="3">
    <location>
        <begin position="71"/>
        <end position="119"/>
    </location>
</feature>
<feature type="compositionally biased region" description="Low complexity" evidence="3">
    <location>
        <begin position="71"/>
        <end position="90"/>
    </location>
</feature>
<feature type="compositionally biased region" description="Gly residues" evidence="3">
    <location>
        <begin position="100"/>
        <end position="109"/>
    </location>
</feature>
<feature type="sequence conflict" description="In Ref. 2; AAS90600." evidence="5" ref="2">
    <original>T</original>
    <variation>A</variation>
    <location>
        <position position="24"/>
    </location>
</feature>
<feature type="sequence conflict" description="In Ref. 2; AAS90600." evidence="5" ref="2">
    <original>T</original>
    <variation>A</variation>
    <location>
        <position position="93"/>
    </location>
</feature>
<feature type="sequence conflict" description="In Ref. 2; AAS90600." evidence="5" ref="2">
    <original>D</original>
    <variation>N</variation>
    <location>
        <position position="105"/>
    </location>
</feature>
<feature type="sequence conflict" description="In Ref. 2; AAS90600." evidence="5" ref="2">
    <original>S</original>
    <variation>N</variation>
    <location>
        <position position="114"/>
    </location>
</feature>
<keyword id="KW-0090">Biological rhythms</keyword>
<keyword id="KW-0238">DNA-binding</keyword>
<keyword id="KW-0539">Nucleus</keyword>
<keyword id="KW-1185">Reference proteome</keyword>
<keyword id="KW-0804">Transcription</keyword>
<keyword id="KW-0805">Transcription regulation</keyword>
<evidence type="ECO:0000250" key="1"/>
<evidence type="ECO:0000255" key="2">
    <source>
        <dbReference type="PROSITE-ProRule" id="PRU00625"/>
    </source>
</evidence>
<evidence type="ECO:0000256" key="3">
    <source>
        <dbReference type="SAM" id="MobiDB-lite"/>
    </source>
</evidence>
<evidence type="ECO:0000269" key="4">
    <source>
    </source>
</evidence>
<evidence type="ECO:0000305" key="5"/>
<accession>Q94DH3</accession>
<accession>A0A0N7KEH5</accession>
<accession>Q6PT61</accession>
<reference key="1">
    <citation type="journal article" date="2005" name="Genes Cells">
        <title>PHYTOCLOCK 1 encoding a novel GARP protein essential for the Arabidopsis circadian clock.</title>
        <authorList>
            <person name="Onai K."/>
            <person name="Ishiura M."/>
        </authorList>
    </citation>
    <scope>NUCLEOTIDE SEQUENCE [GENOMIC DNA]</scope>
    <scope>INDUCTION</scope>
</reference>
<reference key="2">
    <citation type="submission" date="2004-03" db="EMBL/GenBank/DDBJ databases">
        <title>Characterization of two downstream proteins in a possible two-component system in the early responses of rice to infection by a fungal pathogen.</title>
        <authorList>
            <person name="Qu L."/>
            <person name="Gu H."/>
        </authorList>
    </citation>
    <scope>NUCLEOTIDE SEQUENCE [MRNA]</scope>
    <source>
        <strain>cv. Zhonghua 11</strain>
    </source>
</reference>
<reference key="3">
    <citation type="journal article" date="2002" name="Nature">
        <title>The genome sequence and structure of rice chromosome 1.</title>
        <authorList>
            <person name="Sasaki T."/>
            <person name="Matsumoto T."/>
            <person name="Yamamoto K."/>
            <person name="Sakata K."/>
            <person name="Baba T."/>
            <person name="Katayose Y."/>
            <person name="Wu J."/>
            <person name="Niimura Y."/>
            <person name="Cheng Z."/>
            <person name="Nagamura Y."/>
            <person name="Antonio B.A."/>
            <person name="Kanamori H."/>
            <person name="Hosokawa S."/>
            <person name="Masukawa M."/>
            <person name="Arikawa K."/>
            <person name="Chiden Y."/>
            <person name="Hayashi M."/>
            <person name="Okamoto M."/>
            <person name="Ando T."/>
            <person name="Aoki H."/>
            <person name="Arita K."/>
            <person name="Hamada M."/>
            <person name="Harada C."/>
            <person name="Hijishita S."/>
            <person name="Honda M."/>
            <person name="Ichikawa Y."/>
            <person name="Idonuma A."/>
            <person name="Iijima M."/>
            <person name="Ikeda M."/>
            <person name="Ikeno M."/>
            <person name="Ito S."/>
            <person name="Ito T."/>
            <person name="Ito Y."/>
            <person name="Ito Y."/>
            <person name="Iwabuchi A."/>
            <person name="Kamiya K."/>
            <person name="Karasawa W."/>
            <person name="Katagiri S."/>
            <person name="Kikuta A."/>
            <person name="Kobayashi N."/>
            <person name="Kono I."/>
            <person name="Machita K."/>
            <person name="Maehara T."/>
            <person name="Mizuno H."/>
            <person name="Mizubayashi T."/>
            <person name="Mukai Y."/>
            <person name="Nagasaki H."/>
            <person name="Nakashima M."/>
            <person name="Nakama Y."/>
            <person name="Nakamichi Y."/>
            <person name="Nakamura M."/>
            <person name="Namiki N."/>
            <person name="Negishi M."/>
            <person name="Ohta I."/>
            <person name="Ono N."/>
            <person name="Saji S."/>
            <person name="Sakai K."/>
            <person name="Shibata M."/>
            <person name="Shimokawa T."/>
            <person name="Shomura A."/>
            <person name="Song J."/>
            <person name="Takazaki Y."/>
            <person name="Terasawa K."/>
            <person name="Tsuji K."/>
            <person name="Waki K."/>
            <person name="Yamagata H."/>
            <person name="Yamane H."/>
            <person name="Yoshiki S."/>
            <person name="Yoshihara R."/>
            <person name="Yukawa K."/>
            <person name="Zhong H."/>
            <person name="Iwama H."/>
            <person name="Endo T."/>
            <person name="Ito H."/>
            <person name="Hahn J.H."/>
            <person name="Kim H.-I."/>
            <person name="Eun M.-Y."/>
            <person name="Yano M."/>
            <person name="Jiang J."/>
            <person name="Gojobori T."/>
        </authorList>
    </citation>
    <scope>NUCLEOTIDE SEQUENCE [LARGE SCALE GENOMIC DNA]</scope>
    <source>
        <strain>cv. Nipponbare</strain>
    </source>
</reference>
<reference key="4">
    <citation type="journal article" date="2005" name="Nature">
        <title>The map-based sequence of the rice genome.</title>
        <authorList>
            <consortium name="International rice genome sequencing project (IRGSP)"/>
        </authorList>
    </citation>
    <scope>NUCLEOTIDE SEQUENCE [LARGE SCALE GENOMIC DNA]</scope>
    <source>
        <strain>cv. Nipponbare</strain>
    </source>
</reference>
<reference key="5">
    <citation type="journal article" date="2008" name="Nucleic Acids Res.">
        <title>The rice annotation project database (RAP-DB): 2008 update.</title>
        <authorList>
            <consortium name="The rice annotation project (RAP)"/>
        </authorList>
    </citation>
    <scope>GENOME REANNOTATION</scope>
    <source>
        <strain>cv. Nipponbare</strain>
    </source>
</reference>
<reference key="6">
    <citation type="journal article" date="2013" name="Rice">
        <title>Improvement of the Oryza sativa Nipponbare reference genome using next generation sequence and optical map data.</title>
        <authorList>
            <person name="Kawahara Y."/>
            <person name="de la Bastide M."/>
            <person name="Hamilton J.P."/>
            <person name="Kanamori H."/>
            <person name="McCombie W.R."/>
            <person name="Ouyang S."/>
            <person name="Schwartz D.C."/>
            <person name="Tanaka T."/>
            <person name="Wu J."/>
            <person name="Zhou S."/>
            <person name="Childs K.L."/>
            <person name="Davidson R.M."/>
            <person name="Lin H."/>
            <person name="Quesada-Ocampo L."/>
            <person name="Vaillancourt B."/>
            <person name="Sakai H."/>
            <person name="Lee S.S."/>
            <person name="Kim J."/>
            <person name="Numa H."/>
            <person name="Itoh T."/>
            <person name="Buell C.R."/>
            <person name="Matsumoto T."/>
        </authorList>
    </citation>
    <scope>GENOME REANNOTATION</scope>
    <source>
        <strain>cv. Nipponbare</strain>
    </source>
</reference>
<reference key="7">
    <citation type="journal article" date="2005" name="PLoS Biol.">
        <title>The genomes of Oryza sativa: a history of duplications.</title>
        <authorList>
            <person name="Yu J."/>
            <person name="Wang J."/>
            <person name="Lin W."/>
            <person name="Li S."/>
            <person name="Li H."/>
            <person name="Zhou J."/>
            <person name="Ni P."/>
            <person name="Dong W."/>
            <person name="Hu S."/>
            <person name="Zeng C."/>
            <person name="Zhang J."/>
            <person name="Zhang Y."/>
            <person name="Li R."/>
            <person name="Xu Z."/>
            <person name="Li S."/>
            <person name="Li X."/>
            <person name="Zheng H."/>
            <person name="Cong L."/>
            <person name="Lin L."/>
            <person name="Yin J."/>
            <person name="Geng J."/>
            <person name="Li G."/>
            <person name="Shi J."/>
            <person name="Liu J."/>
            <person name="Lv H."/>
            <person name="Li J."/>
            <person name="Wang J."/>
            <person name="Deng Y."/>
            <person name="Ran L."/>
            <person name="Shi X."/>
            <person name="Wang X."/>
            <person name="Wu Q."/>
            <person name="Li C."/>
            <person name="Ren X."/>
            <person name="Wang J."/>
            <person name="Wang X."/>
            <person name="Li D."/>
            <person name="Liu D."/>
            <person name="Zhang X."/>
            <person name="Ji Z."/>
            <person name="Zhao W."/>
            <person name="Sun Y."/>
            <person name="Zhang Z."/>
            <person name="Bao J."/>
            <person name="Han Y."/>
            <person name="Dong L."/>
            <person name="Ji J."/>
            <person name="Chen P."/>
            <person name="Wu S."/>
            <person name="Liu J."/>
            <person name="Xiao Y."/>
            <person name="Bu D."/>
            <person name="Tan J."/>
            <person name="Yang L."/>
            <person name="Ye C."/>
            <person name="Zhang J."/>
            <person name="Xu J."/>
            <person name="Zhou Y."/>
            <person name="Yu Y."/>
            <person name="Zhang B."/>
            <person name="Zhuang S."/>
            <person name="Wei H."/>
            <person name="Liu B."/>
            <person name="Lei M."/>
            <person name="Yu H."/>
            <person name="Li Y."/>
            <person name="Xu H."/>
            <person name="Wei S."/>
            <person name="He X."/>
            <person name="Fang L."/>
            <person name="Zhang Z."/>
            <person name="Zhang Y."/>
            <person name="Huang X."/>
            <person name="Su Z."/>
            <person name="Tong W."/>
            <person name="Li J."/>
            <person name="Tong Z."/>
            <person name="Li S."/>
            <person name="Ye J."/>
            <person name="Wang L."/>
            <person name="Fang L."/>
            <person name="Lei T."/>
            <person name="Chen C.-S."/>
            <person name="Chen H.-C."/>
            <person name="Xu Z."/>
            <person name="Li H."/>
            <person name="Huang H."/>
            <person name="Zhang F."/>
            <person name="Xu H."/>
            <person name="Li N."/>
            <person name="Zhao C."/>
            <person name="Li S."/>
            <person name="Dong L."/>
            <person name="Huang Y."/>
            <person name="Li L."/>
            <person name="Xi Y."/>
            <person name="Qi Q."/>
            <person name="Li W."/>
            <person name="Zhang B."/>
            <person name="Hu W."/>
            <person name="Zhang Y."/>
            <person name="Tian X."/>
            <person name="Jiao Y."/>
            <person name="Liang X."/>
            <person name="Jin J."/>
            <person name="Gao L."/>
            <person name="Zheng W."/>
            <person name="Hao B."/>
            <person name="Liu S.-M."/>
            <person name="Wang W."/>
            <person name="Yuan L."/>
            <person name="Cao M."/>
            <person name="McDermott J."/>
            <person name="Samudrala R."/>
            <person name="Wang J."/>
            <person name="Wong G.K.-S."/>
            <person name="Yang H."/>
        </authorList>
    </citation>
    <scope>NUCLEOTIDE SEQUENCE [LARGE SCALE GENOMIC DNA]</scope>
    <source>
        <strain>cv. Nipponbare</strain>
    </source>
</reference>
<name>PCL1_ORYSJ</name>
<sequence>MGEEAPEEYELGGGEDERVMEWETGLPGADELTPLSQPLVPAGLAAAFRIPPEPGRTLLDVHRASAATVSRLRRASSSSSSSFPAFASKGAGTGADEAESGGGADGGNGNTNNSSSKRARLVWTPQLHKRFVEVVAHLGMKNAVPKTIMQLMNVEGLTRENVASHLQKYRLYVKRMQGLSNEGPSPSDHIFASTPVPHASLHDQVPSPYHPHPHHHSYNNAAYAATVSSYHHYHHANH</sequence>
<dbReference type="EMBL" id="AB206578">
    <property type="protein sequence ID" value="BAE16279.1"/>
    <property type="molecule type" value="Genomic_DNA"/>
</dbReference>
<dbReference type="EMBL" id="AY581256">
    <property type="protein sequence ID" value="AAS90600.1"/>
    <property type="molecule type" value="mRNA"/>
</dbReference>
<dbReference type="EMBL" id="AP003277">
    <property type="protein sequence ID" value="BAB63676.1"/>
    <property type="molecule type" value="Genomic_DNA"/>
</dbReference>
<dbReference type="EMBL" id="AP008207">
    <property type="protein sequence ID" value="BAF07451.1"/>
    <property type="molecule type" value="Genomic_DNA"/>
</dbReference>
<dbReference type="EMBL" id="AP014957">
    <property type="protein sequence ID" value="BAS76433.1"/>
    <property type="molecule type" value="Genomic_DNA"/>
</dbReference>
<dbReference type="EMBL" id="CM000138">
    <property type="protein sequence ID" value="EAZ14991.1"/>
    <property type="molecule type" value="Genomic_DNA"/>
</dbReference>
<dbReference type="RefSeq" id="XP_015640779.1">
    <property type="nucleotide sequence ID" value="XM_015785293.1"/>
</dbReference>
<dbReference type="SMR" id="Q94DH3"/>
<dbReference type="FunCoup" id="Q94DH3">
    <property type="interactions" value="642"/>
</dbReference>
<dbReference type="STRING" id="39947.Q94DH3"/>
<dbReference type="iPTMnet" id="Q94DH3"/>
<dbReference type="PaxDb" id="39947-Q94DH3"/>
<dbReference type="EnsemblPlants" id="Os01t0971800-01">
    <property type="protein sequence ID" value="Os01t0971800-01"/>
    <property type="gene ID" value="Os01g0971800"/>
</dbReference>
<dbReference type="Gramene" id="Os01t0971800-01">
    <property type="protein sequence ID" value="Os01t0971800-01"/>
    <property type="gene ID" value="Os01g0971800"/>
</dbReference>
<dbReference type="KEGG" id="dosa:Os01g0971800"/>
<dbReference type="eggNOG" id="ENOG502RIEW">
    <property type="taxonomic scope" value="Eukaryota"/>
</dbReference>
<dbReference type="HOGENOM" id="CLU_055357_2_0_1"/>
<dbReference type="InParanoid" id="Q94DH3"/>
<dbReference type="OMA" id="PQAYHHA"/>
<dbReference type="OrthoDB" id="60033at2759"/>
<dbReference type="Proteomes" id="UP000000763">
    <property type="component" value="Chromosome 1"/>
</dbReference>
<dbReference type="Proteomes" id="UP000007752">
    <property type="component" value="Chromosome 1"/>
</dbReference>
<dbReference type="Proteomes" id="UP000059680">
    <property type="component" value="Chromosome 1"/>
</dbReference>
<dbReference type="GO" id="GO:0005634">
    <property type="term" value="C:nucleus"/>
    <property type="evidence" value="ECO:0000318"/>
    <property type="project" value="GO_Central"/>
</dbReference>
<dbReference type="GO" id="GO:0003677">
    <property type="term" value="F:DNA binding"/>
    <property type="evidence" value="ECO:0007669"/>
    <property type="project" value="UniProtKB-KW"/>
</dbReference>
<dbReference type="GO" id="GO:0003700">
    <property type="term" value="F:DNA-binding transcription factor activity"/>
    <property type="evidence" value="ECO:0000318"/>
    <property type="project" value="GO_Central"/>
</dbReference>
<dbReference type="GO" id="GO:0048511">
    <property type="term" value="P:rhythmic process"/>
    <property type="evidence" value="ECO:0007669"/>
    <property type="project" value="UniProtKB-KW"/>
</dbReference>
<dbReference type="FunFam" id="1.10.10.60:FF:000007">
    <property type="entry name" value="Two-component response regulator"/>
    <property type="match status" value="1"/>
</dbReference>
<dbReference type="Gene3D" id="1.10.10.60">
    <property type="entry name" value="Homeodomain-like"/>
    <property type="match status" value="1"/>
</dbReference>
<dbReference type="InterPro" id="IPR009057">
    <property type="entry name" value="Homeodomain-like_sf"/>
</dbReference>
<dbReference type="InterPro" id="IPR044841">
    <property type="entry name" value="LUX/BOA-like"/>
</dbReference>
<dbReference type="InterPro" id="IPR017930">
    <property type="entry name" value="Myb_dom"/>
</dbReference>
<dbReference type="InterPro" id="IPR006447">
    <property type="entry name" value="Myb_dom_plants"/>
</dbReference>
<dbReference type="InterPro" id="IPR001005">
    <property type="entry name" value="SANT/Myb"/>
</dbReference>
<dbReference type="NCBIfam" id="TIGR01557">
    <property type="entry name" value="myb_SHAQKYF"/>
    <property type="match status" value="1"/>
</dbReference>
<dbReference type="PANTHER" id="PTHR31442">
    <property type="entry name" value="HOMEODOMAIN-LIKE SUPERFAMILY PROTEIN-RELATED"/>
    <property type="match status" value="1"/>
</dbReference>
<dbReference type="PANTHER" id="PTHR31442:SF21">
    <property type="entry name" value="TRANSCRIPTION FACTOR BOA-RELATED"/>
    <property type="match status" value="1"/>
</dbReference>
<dbReference type="Pfam" id="PF00249">
    <property type="entry name" value="Myb_DNA-binding"/>
    <property type="match status" value="1"/>
</dbReference>
<dbReference type="SUPFAM" id="SSF46689">
    <property type="entry name" value="Homeodomain-like"/>
    <property type="match status" value="1"/>
</dbReference>
<dbReference type="PROSITE" id="PS51294">
    <property type="entry name" value="HTH_MYB"/>
    <property type="match status" value="1"/>
</dbReference>
<gene>
    <name type="primary">PCL1</name>
    <name type="ordered locus">Os01g0971800</name>
    <name type="ORF">OsJ_04927</name>
    <name type="ORF">P0518C01.17</name>
</gene>